<name>FABH_WOLTR</name>
<organism>
    <name type="scientific">Wolbachia sp. subsp. Brugia malayi (strain TRS)</name>
    <dbReference type="NCBI Taxonomy" id="292805"/>
    <lineage>
        <taxon>Bacteria</taxon>
        <taxon>Pseudomonadati</taxon>
        <taxon>Pseudomonadota</taxon>
        <taxon>Alphaproteobacteria</taxon>
        <taxon>Rickettsiales</taxon>
        <taxon>Anaplasmataceae</taxon>
        <taxon>Wolbachieae</taxon>
        <taxon>Wolbachia</taxon>
    </lineage>
</organism>
<keyword id="KW-0012">Acyltransferase</keyword>
<keyword id="KW-0963">Cytoplasm</keyword>
<keyword id="KW-0275">Fatty acid biosynthesis</keyword>
<keyword id="KW-0276">Fatty acid metabolism</keyword>
<keyword id="KW-0444">Lipid biosynthesis</keyword>
<keyword id="KW-0443">Lipid metabolism</keyword>
<keyword id="KW-0511">Multifunctional enzyme</keyword>
<keyword id="KW-1185">Reference proteome</keyword>
<keyword id="KW-0808">Transferase</keyword>
<reference key="1">
    <citation type="journal article" date="2005" name="PLoS Biol.">
        <title>The Wolbachia genome of Brugia malayi: endosymbiont evolution within a human pathogenic nematode.</title>
        <authorList>
            <person name="Foster J."/>
            <person name="Ganatra M."/>
            <person name="Kamal I."/>
            <person name="Ware J."/>
            <person name="Makarova K."/>
            <person name="Ivanova N."/>
            <person name="Bhattacharyya A."/>
            <person name="Kapatral V."/>
            <person name="Kumar S."/>
            <person name="Posfai J."/>
            <person name="Vincze T."/>
            <person name="Ingram J."/>
            <person name="Moran L."/>
            <person name="Lapidus A."/>
            <person name="Omelchenko M."/>
            <person name="Kyrpides N."/>
            <person name="Ghedin E."/>
            <person name="Wang S."/>
            <person name="Goltsman E."/>
            <person name="Joukov V."/>
            <person name="Ostrovskaya O."/>
            <person name="Tsukerman K."/>
            <person name="Mazur M."/>
            <person name="Comb D."/>
            <person name="Koonin E."/>
            <person name="Slatko B."/>
        </authorList>
    </citation>
    <scope>NUCLEOTIDE SEQUENCE [LARGE SCALE GENOMIC DNA]</scope>
    <source>
        <strain>TRS</strain>
    </source>
</reference>
<dbReference type="EC" id="2.3.1.180" evidence="1"/>
<dbReference type="EMBL" id="AE017321">
    <property type="protein sequence ID" value="AAW71202.1"/>
    <property type="molecule type" value="Genomic_DNA"/>
</dbReference>
<dbReference type="RefSeq" id="WP_011256812.1">
    <property type="nucleotide sequence ID" value="NC_006833.1"/>
</dbReference>
<dbReference type="SMR" id="Q5GS22"/>
<dbReference type="STRING" id="292805.Wbm0614"/>
<dbReference type="KEGG" id="wbm:Wbm0614"/>
<dbReference type="eggNOG" id="COG0332">
    <property type="taxonomic scope" value="Bacteria"/>
</dbReference>
<dbReference type="HOGENOM" id="CLU_039592_3_1_5"/>
<dbReference type="UniPathway" id="UPA00094"/>
<dbReference type="Proteomes" id="UP000000534">
    <property type="component" value="Chromosome"/>
</dbReference>
<dbReference type="GO" id="GO:0005737">
    <property type="term" value="C:cytoplasm"/>
    <property type="evidence" value="ECO:0007669"/>
    <property type="project" value="UniProtKB-SubCell"/>
</dbReference>
<dbReference type="GO" id="GO:0004315">
    <property type="term" value="F:3-oxoacyl-[acyl-carrier-protein] synthase activity"/>
    <property type="evidence" value="ECO:0007669"/>
    <property type="project" value="InterPro"/>
</dbReference>
<dbReference type="GO" id="GO:0033818">
    <property type="term" value="F:beta-ketoacyl-acyl-carrier-protein synthase III activity"/>
    <property type="evidence" value="ECO:0007669"/>
    <property type="project" value="UniProtKB-UniRule"/>
</dbReference>
<dbReference type="GO" id="GO:0006633">
    <property type="term" value="P:fatty acid biosynthetic process"/>
    <property type="evidence" value="ECO:0007669"/>
    <property type="project" value="UniProtKB-UniRule"/>
</dbReference>
<dbReference type="GO" id="GO:0044550">
    <property type="term" value="P:secondary metabolite biosynthetic process"/>
    <property type="evidence" value="ECO:0007669"/>
    <property type="project" value="TreeGrafter"/>
</dbReference>
<dbReference type="CDD" id="cd00830">
    <property type="entry name" value="KAS_III"/>
    <property type="match status" value="1"/>
</dbReference>
<dbReference type="FunFam" id="3.40.47.10:FF:000004">
    <property type="entry name" value="3-oxoacyl-[acyl-carrier-protein] synthase 3"/>
    <property type="match status" value="1"/>
</dbReference>
<dbReference type="Gene3D" id="3.40.47.10">
    <property type="match status" value="1"/>
</dbReference>
<dbReference type="HAMAP" id="MF_01815">
    <property type="entry name" value="FabH"/>
    <property type="match status" value="1"/>
</dbReference>
<dbReference type="InterPro" id="IPR013747">
    <property type="entry name" value="ACP_syn_III_C"/>
</dbReference>
<dbReference type="InterPro" id="IPR013751">
    <property type="entry name" value="ACP_syn_III_N"/>
</dbReference>
<dbReference type="InterPro" id="IPR004655">
    <property type="entry name" value="FabH"/>
</dbReference>
<dbReference type="InterPro" id="IPR016039">
    <property type="entry name" value="Thiolase-like"/>
</dbReference>
<dbReference type="NCBIfam" id="TIGR00747">
    <property type="entry name" value="fabH"/>
    <property type="match status" value="1"/>
</dbReference>
<dbReference type="NCBIfam" id="NF006829">
    <property type="entry name" value="PRK09352.1"/>
    <property type="match status" value="1"/>
</dbReference>
<dbReference type="PANTHER" id="PTHR34069">
    <property type="entry name" value="3-OXOACYL-[ACYL-CARRIER-PROTEIN] SYNTHASE 3"/>
    <property type="match status" value="1"/>
</dbReference>
<dbReference type="PANTHER" id="PTHR34069:SF2">
    <property type="entry name" value="BETA-KETOACYL-[ACYL-CARRIER-PROTEIN] SYNTHASE III"/>
    <property type="match status" value="1"/>
</dbReference>
<dbReference type="Pfam" id="PF08545">
    <property type="entry name" value="ACP_syn_III"/>
    <property type="match status" value="1"/>
</dbReference>
<dbReference type="Pfam" id="PF08541">
    <property type="entry name" value="ACP_syn_III_C"/>
    <property type="match status" value="1"/>
</dbReference>
<dbReference type="SUPFAM" id="SSF53901">
    <property type="entry name" value="Thiolase-like"/>
    <property type="match status" value="1"/>
</dbReference>
<evidence type="ECO:0000255" key="1">
    <source>
        <dbReference type="HAMAP-Rule" id="MF_01815"/>
    </source>
</evidence>
<sequence>MNKSFILSTGSYLPKKKLGNDEIALMVETSDEWIRQRTGITQRYIADEAELTSDLAVNSAKNAIEKAQISVDEIGLIIVATTTPDKTLPSCATIAQNKLKCKNAFSFDVQAACSGFIYAVTIADSLIKSNDRIKYALVIGAEIMSRIVDWKDRSTCVLFGDGAGAVIMKSTAHCNEMTENSTRGIISTNLYSDGNVDVLCTKGGISSTGDSGKIYMNGREVFKHAVDKLTASIEETLRCNNLKITDIDWLVPHQANIRIIEAVVKKLNFLMEKVINTVDQHANTSAASIPLALDYAIQKPKIKPGSLGILVAIGAGLTWGSVLLRY</sequence>
<feature type="chain" id="PRO_1000056442" description="Beta-ketoacyl-[acyl-carrier-protein] synthase III">
    <location>
        <begin position="1"/>
        <end position="326"/>
    </location>
</feature>
<feature type="region of interest" description="ACP-binding" evidence="1">
    <location>
        <begin position="254"/>
        <end position="258"/>
    </location>
</feature>
<feature type="active site" evidence="1">
    <location>
        <position position="113"/>
    </location>
</feature>
<feature type="active site" evidence="1">
    <location>
        <position position="253"/>
    </location>
</feature>
<feature type="active site" evidence="1">
    <location>
        <position position="283"/>
    </location>
</feature>
<accession>Q5GS22</accession>
<protein>
    <recommendedName>
        <fullName evidence="1">Beta-ketoacyl-[acyl-carrier-protein] synthase III</fullName>
        <shortName evidence="1">Beta-ketoacyl-ACP synthase III</shortName>
        <shortName evidence="1">KAS III</shortName>
        <ecNumber evidence="1">2.3.1.180</ecNumber>
    </recommendedName>
    <alternativeName>
        <fullName evidence="1">3-oxoacyl-[acyl-carrier-protein] synthase 3</fullName>
    </alternativeName>
    <alternativeName>
        <fullName evidence="1">3-oxoacyl-[acyl-carrier-protein] synthase III</fullName>
    </alternativeName>
</protein>
<comment type="function">
    <text evidence="1">Catalyzes the condensation reaction of fatty acid synthesis by the addition to an acyl acceptor of two carbons from malonyl-ACP. Catalyzes the first condensation reaction which initiates fatty acid synthesis and may therefore play a role in governing the total rate of fatty acid production. Possesses both acetoacetyl-ACP synthase and acetyl transacylase activities. Its substrate specificity determines the biosynthesis of branched-chain and/or straight-chain of fatty acids.</text>
</comment>
<comment type="catalytic activity">
    <reaction evidence="1">
        <text>malonyl-[ACP] + acetyl-CoA + H(+) = 3-oxobutanoyl-[ACP] + CO2 + CoA</text>
        <dbReference type="Rhea" id="RHEA:12080"/>
        <dbReference type="Rhea" id="RHEA-COMP:9623"/>
        <dbReference type="Rhea" id="RHEA-COMP:9625"/>
        <dbReference type="ChEBI" id="CHEBI:15378"/>
        <dbReference type="ChEBI" id="CHEBI:16526"/>
        <dbReference type="ChEBI" id="CHEBI:57287"/>
        <dbReference type="ChEBI" id="CHEBI:57288"/>
        <dbReference type="ChEBI" id="CHEBI:78449"/>
        <dbReference type="ChEBI" id="CHEBI:78450"/>
        <dbReference type="EC" id="2.3.1.180"/>
    </reaction>
</comment>
<comment type="pathway">
    <text evidence="1">Lipid metabolism; fatty acid biosynthesis.</text>
</comment>
<comment type="subunit">
    <text evidence="1">Homodimer.</text>
</comment>
<comment type="subcellular location">
    <subcellularLocation>
        <location evidence="1">Cytoplasm</location>
    </subcellularLocation>
</comment>
<comment type="domain">
    <text evidence="1">The last Arg residue of the ACP-binding site is essential for the weak association between ACP/AcpP and FabH.</text>
</comment>
<comment type="similarity">
    <text evidence="1">Belongs to the thiolase-like superfamily. FabH family.</text>
</comment>
<proteinExistence type="inferred from homology"/>
<gene>
    <name evidence="1" type="primary">fabH</name>
    <name type="ordered locus">Wbm0614</name>
</gene>